<dbReference type="EMBL" id="U00096">
    <property type="protein sequence ID" value="AAC74759.2"/>
    <property type="molecule type" value="Genomic_DNA"/>
</dbReference>
<dbReference type="EMBL" id="AP009048">
    <property type="protein sequence ID" value="BAE76502.1"/>
    <property type="molecule type" value="Genomic_DNA"/>
</dbReference>
<dbReference type="PIR" id="A64927">
    <property type="entry name" value="A64927"/>
</dbReference>
<dbReference type="RefSeq" id="NP_416204.2">
    <property type="nucleotide sequence ID" value="NC_000913.3"/>
</dbReference>
<dbReference type="RefSeq" id="WP_001310864.1">
    <property type="nucleotide sequence ID" value="NZ_STEB01000003.1"/>
</dbReference>
<dbReference type="SMR" id="P76196"/>
<dbReference type="BioGRID" id="850541">
    <property type="interactions" value="1"/>
</dbReference>
<dbReference type="FunCoup" id="P76196">
    <property type="interactions" value="42"/>
</dbReference>
<dbReference type="IntAct" id="P76196">
    <property type="interactions" value="1"/>
</dbReference>
<dbReference type="STRING" id="511145.b1689"/>
<dbReference type="ChEMBL" id="CHEMBL3309035"/>
<dbReference type="PaxDb" id="511145-b1689"/>
<dbReference type="EnsemblBacteria" id="AAC74759">
    <property type="protein sequence ID" value="AAC74759"/>
    <property type="gene ID" value="b1689"/>
</dbReference>
<dbReference type="GeneID" id="946181"/>
<dbReference type="KEGG" id="ecj:JW1679"/>
<dbReference type="KEGG" id="eco:b1689"/>
<dbReference type="KEGG" id="ecoc:C3026_09675"/>
<dbReference type="PATRIC" id="fig|511145.12.peg.1760"/>
<dbReference type="EchoBASE" id="EB3728"/>
<dbReference type="eggNOG" id="ENOG5032R81">
    <property type="taxonomic scope" value="Bacteria"/>
</dbReference>
<dbReference type="HOGENOM" id="CLU_135528_0_0_6"/>
<dbReference type="InParanoid" id="P76196"/>
<dbReference type="OMA" id="YQSVANE"/>
<dbReference type="OrthoDB" id="7066373at2"/>
<dbReference type="PhylomeDB" id="P76196"/>
<dbReference type="BioCyc" id="EcoCyc:G6915-MONOMER"/>
<dbReference type="PRO" id="PR:P76196"/>
<dbReference type="Proteomes" id="UP000000625">
    <property type="component" value="Chromosome"/>
</dbReference>
<dbReference type="GO" id="GO:0003677">
    <property type="term" value="F:DNA binding"/>
    <property type="evidence" value="ECO:0007669"/>
    <property type="project" value="InterPro"/>
</dbReference>
<dbReference type="Gene3D" id="1.10.3100.10">
    <property type="entry name" value="Putative cytoplasmic protein"/>
    <property type="match status" value="1"/>
</dbReference>
<dbReference type="InterPro" id="IPR015060">
    <property type="entry name" value="Aca2_YdiL-like"/>
</dbReference>
<dbReference type="InterPro" id="IPR010982">
    <property type="entry name" value="Lambda_DNA-bd_dom_sf"/>
</dbReference>
<dbReference type="InterPro" id="IPR027910">
    <property type="entry name" value="YdiL_sf"/>
</dbReference>
<dbReference type="Pfam" id="PF08965">
    <property type="entry name" value="Aca2_YdiL"/>
    <property type="match status" value="1"/>
</dbReference>
<dbReference type="SUPFAM" id="SSF47413">
    <property type="entry name" value="lambda repressor-like DNA-binding domains"/>
    <property type="match status" value="1"/>
</dbReference>
<proteinExistence type="predicted"/>
<protein>
    <recommendedName>
        <fullName>Uncharacterized protein YdiL</fullName>
    </recommendedName>
</protein>
<gene>
    <name type="primary">ydiL</name>
    <name type="ordered locus">b1689</name>
    <name type="ordered locus">JW1679</name>
</gene>
<keyword id="KW-1185">Reference proteome</keyword>
<accession>P76196</accession>
<accession>Q2MB54</accession>
<sequence length="118" mass="13929">MNAYELQALRHIFAMTIDECATWIAQTGDSESWRQWENGKCAIPDRVVEQLLAMRQQRKKHLHAIIEKINNRIGNNTMRFFPDLTAFQRVYPDGNFIDWKIYQSVAAELYAHDLERLC</sequence>
<organism>
    <name type="scientific">Escherichia coli (strain K12)</name>
    <dbReference type="NCBI Taxonomy" id="83333"/>
    <lineage>
        <taxon>Bacteria</taxon>
        <taxon>Pseudomonadati</taxon>
        <taxon>Pseudomonadota</taxon>
        <taxon>Gammaproteobacteria</taxon>
        <taxon>Enterobacterales</taxon>
        <taxon>Enterobacteriaceae</taxon>
        <taxon>Escherichia</taxon>
    </lineage>
</organism>
<feature type="chain" id="PRO_0000168996" description="Uncharacterized protein YdiL">
    <location>
        <begin position="1"/>
        <end position="118"/>
    </location>
</feature>
<name>YDIL_ECOLI</name>
<reference key="1">
    <citation type="journal article" date="1997" name="Science">
        <title>The complete genome sequence of Escherichia coli K-12.</title>
        <authorList>
            <person name="Blattner F.R."/>
            <person name="Plunkett G. III"/>
            <person name="Bloch C.A."/>
            <person name="Perna N.T."/>
            <person name="Burland V."/>
            <person name="Riley M."/>
            <person name="Collado-Vides J."/>
            <person name="Glasner J.D."/>
            <person name="Rode C.K."/>
            <person name="Mayhew G.F."/>
            <person name="Gregor J."/>
            <person name="Davis N.W."/>
            <person name="Kirkpatrick H.A."/>
            <person name="Goeden M.A."/>
            <person name="Rose D.J."/>
            <person name="Mau B."/>
            <person name="Shao Y."/>
        </authorList>
    </citation>
    <scope>NUCLEOTIDE SEQUENCE [LARGE SCALE GENOMIC DNA]</scope>
    <source>
        <strain>K12 / MG1655 / ATCC 47076</strain>
    </source>
</reference>
<reference key="2">
    <citation type="journal article" date="2006" name="Mol. Syst. Biol.">
        <title>Highly accurate genome sequences of Escherichia coli K-12 strains MG1655 and W3110.</title>
        <authorList>
            <person name="Hayashi K."/>
            <person name="Morooka N."/>
            <person name="Yamamoto Y."/>
            <person name="Fujita K."/>
            <person name="Isono K."/>
            <person name="Choi S."/>
            <person name="Ohtsubo E."/>
            <person name="Baba T."/>
            <person name="Wanner B.L."/>
            <person name="Mori H."/>
            <person name="Horiuchi T."/>
        </authorList>
    </citation>
    <scope>NUCLEOTIDE SEQUENCE [LARGE SCALE GENOMIC DNA]</scope>
    <source>
        <strain>K12 / W3110 / ATCC 27325 / DSM 5911</strain>
    </source>
</reference>